<dbReference type="EMBL" id="AY101586">
    <property type="protein sequence ID" value="AAM68165.1"/>
    <property type="molecule type" value="Genomic_DNA"/>
</dbReference>
<dbReference type="EMBL" id="AY101587">
    <property type="protein sequence ID" value="AAM68166.1"/>
    <property type="molecule type" value="Genomic_DNA"/>
</dbReference>
<dbReference type="SMR" id="P61563"/>
<dbReference type="FunCoup" id="P61563">
    <property type="interactions" value="5"/>
</dbReference>
<dbReference type="GlyCosmos" id="P61563">
    <property type="glycosylation" value="7 sites, No reported glycans"/>
</dbReference>
<dbReference type="InParanoid" id="P61563"/>
<dbReference type="Proteomes" id="UP000002277">
    <property type="component" value="Unplaced"/>
</dbReference>
<dbReference type="GO" id="GO:0005886">
    <property type="term" value="C:plasma membrane"/>
    <property type="evidence" value="ECO:0007669"/>
    <property type="project" value="UniProtKB-SubCell"/>
</dbReference>
<dbReference type="GO" id="GO:0006949">
    <property type="term" value="P:syncytium formation"/>
    <property type="evidence" value="ECO:0000250"/>
    <property type="project" value="UniProtKB"/>
</dbReference>
<dbReference type="GO" id="GO:0000768">
    <property type="term" value="P:syncytium formation by plasma membrane fusion"/>
    <property type="evidence" value="ECO:0000318"/>
    <property type="project" value="GO_Central"/>
</dbReference>
<dbReference type="CDD" id="cd09851">
    <property type="entry name" value="HTLV-1-like_HR1-HR2"/>
    <property type="match status" value="1"/>
</dbReference>
<dbReference type="FunFam" id="1.10.287.210:FF:000002">
    <property type="entry name" value="Syncytin-2"/>
    <property type="match status" value="1"/>
</dbReference>
<dbReference type="Gene3D" id="1.10.287.210">
    <property type="match status" value="1"/>
</dbReference>
<dbReference type="InterPro" id="IPR018154">
    <property type="entry name" value="TLV/ENV_coat_polyprotein"/>
</dbReference>
<dbReference type="PANTHER" id="PTHR10424:SF48">
    <property type="entry name" value="SYNCYTIN-1"/>
    <property type="match status" value="1"/>
</dbReference>
<dbReference type="PANTHER" id="PTHR10424">
    <property type="entry name" value="VIRAL ENVELOPE PROTEIN"/>
    <property type="match status" value="1"/>
</dbReference>
<dbReference type="Pfam" id="PF00429">
    <property type="entry name" value="TLV_coat"/>
    <property type="match status" value="1"/>
</dbReference>
<dbReference type="SUPFAM" id="SSF58069">
    <property type="entry name" value="Virus ectodomain"/>
    <property type="match status" value="1"/>
</dbReference>
<evidence type="ECO:0000250" key="1"/>
<evidence type="ECO:0000250" key="2">
    <source>
        <dbReference type="UniProtKB" id="P23064"/>
    </source>
</evidence>
<evidence type="ECO:0000250" key="3">
    <source>
        <dbReference type="UniProtKB" id="P60508"/>
    </source>
</evidence>
<evidence type="ECO:0000250" key="4">
    <source>
        <dbReference type="UniProtKB" id="Q9UQF0"/>
    </source>
</evidence>
<evidence type="ECO:0000255" key="5"/>
<evidence type="ECO:0000256" key="6">
    <source>
        <dbReference type="SAM" id="MobiDB-lite"/>
    </source>
</evidence>
<evidence type="ECO:0000305" key="7"/>
<proteinExistence type="inferred from homology"/>
<protein>
    <recommendedName>
        <fullName>Syncytin-1</fullName>
    </recommendedName>
    <alternativeName>
        <fullName>ERV-W1 provirus ancestral Env polyprotein</fullName>
    </alternativeName>
    <alternativeName>
        <fullName>ERVWE1 envelope protein</fullName>
    </alternativeName>
    <alternativeName>
        <fullName>Endogenous retrovirus group W member 1</fullName>
    </alternativeName>
    <alternativeName>
        <fullName>Envelope polyprotein</fullName>
    </alternativeName>
    <alternativeName>
        <fullName>Syncytin</fullName>
    </alternativeName>
    <component>
        <recommendedName>
            <fullName>Surface protein</fullName>
            <shortName>SU</shortName>
        </recommendedName>
    </component>
    <component>
        <recommendedName>
            <fullName>Transmembrane protein</fullName>
            <shortName>TM</shortName>
        </recommendedName>
    </component>
</protein>
<comment type="function">
    <text evidence="1">This endogenous retroviral envelope protein has retained its original fusogenic properties and participates in trophoblast fusion and the formation of a syncytium during placenta morphogenesis. May recognize and induce fusion through binding of SLC1A4 and SLC1A5 (By similarity).</text>
</comment>
<comment type="function">
    <text evidence="1">Endogenous envelope proteins may have kept, lost or modified their original function during evolution. Retroviral envelope proteins mediate receptor recognition and membrane fusion during early infection. The surface protein (SU) mediates receptor recognition, while the transmembrane protein (TM) acts as a class I viral fusion protein. The protein may have at least 3 conformational states: pre-fusion native state, pre-hairpin intermediate state, and post-fusion hairpin state. During viral and target cell membrane fusion, the coiled coil regions (heptad repeats) assume a trimer-of-hairpins structure, positioning the fusion peptide in close proximity to the C-terminal region of the ectodomain. The formation of this structure appears to drive apposition and subsequent fusion of membranes (By similarity).</text>
</comment>
<comment type="subunit">
    <text evidence="1">The mature envelope protein (Env) consists of a trimer of SU-TM heterodimers attached probably by a labile interchain disulfide bond. Interacts with the C-type lectin CD209/DC-SIGN (By similarity).</text>
</comment>
<comment type="subcellular location">
    <molecule>Surface protein</molecule>
    <subcellularLocation>
        <location evidence="7">Cell membrane</location>
        <topology evidence="7">Peripheral membrane protein</topology>
    </subcellularLocation>
    <text evidence="4">The surface protein is not anchored to the membrane, but localizes to the extracellular surface through its binding to TM.</text>
</comment>
<comment type="subcellular location">
    <molecule>Transmembrane protein</molecule>
    <subcellularLocation>
        <location evidence="7">Cell membrane</location>
        <topology evidence="5">Single-pass type I membrane protein</topology>
    </subcellularLocation>
</comment>
<comment type="subcellular location">
    <molecule>Syncytin-1</molecule>
    <subcellularLocation>
        <location evidence="1">Virion</location>
    </subcellularLocation>
</comment>
<comment type="domain">
    <text evidence="1">The cytoplasmic region is essential for the fusiogenic function.</text>
</comment>
<comment type="domain">
    <text evidence="1">The 17 amino acids long immunosuppressive region is present in many retroviral envelope proteins. Synthetic peptides derived from this relatively conserved sequence inhibit immune function in vitro and in vivo (By similarity).</text>
</comment>
<comment type="PTM">
    <text evidence="1">Specific enzymatic cleavages in vivo yield mature proteins. Envelope glycoproteins are synthesized as an inactive precursor that is heavily N-glycosylated and processed likely by furin in the Golgi to yield the mature SU and TM proteins. The cleavage site between SU and TM requires the minimal sequence [KR]-X-[KR]-R (By similarity).</text>
</comment>
<comment type="PTM">
    <text evidence="1">The CXXC motif is highly conserved across a broad range of retroviral envelope proteins. It is thought to participate in the formation of a labile disulfide bond possibly with the CX6CC motif present in the transmembrane protein (By similarity).</text>
</comment>
<comment type="miscellaneous">
    <text>Ortholog of the human HERV-W_7q21.2 envelope protein.</text>
</comment>
<comment type="miscellaneous">
    <text>The genome contains a high percentage of proviral-like elements, also called endogenous retroviruses (ERVs) that are the genomic traces of ancient infections of the germline by exogenous retroviruses. Although most of these elements are defective, some have conserved a functional envelope (env) gene, most probably diverted by the host for its benefit.</text>
</comment>
<comment type="similarity">
    <text evidence="7">Belongs to the gamma type-C retroviral envelope protein family. HERV class-I W env subfamily.</text>
</comment>
<keyword id="KW-1003">Cell membrane</keyword>
<keyword id="KW-0165">Cleavage on pair of basic residues</keyword>
<keyword id="KW-1015">Disulfide bond</keyword>
<keyword id="KW-0895">ERV</keyword>
<keyword id="KW-0325">Glycoprotein</keyword>
<keyword id="KW-0472">Membrane</keyword>
<keyword id="KW-1185">Reference proteome</keyword>
<keyword id="KW-0732">Signal</keyword>
<keyword id="KW-0812">Transmembrane</keyword>
<keyword id="KW-1133">Transmembrane helix</keyword>
<keyword id="KW-0814">Transposable element</keyword>
<keyword id="KW-0261">Viral envelope protein</keyword>
<keyword id="KW-0946">Virion</keyword>
<sequence length="538" mass="59981">MALPYHIFLFTVLLPSFTLTAPPPCRCMTSSSPYQEFLWRMQRPGNIDAPSYRSFSKGTPTFTAHTHMPRNCYHSATLCMHANTHYWTGKIINPSCPGGLGVTVCWTYFTHTGMSDGGGVQDQAREKHVKEVISQLTRVHSASRPYKGLDLSKLHETLRTHTRLVSLFNTTLTGLHEVSAQNPTNCWICLPLNFRPYVSIPVPEQWNNFSTEINTTSVLVGPLVSNLEITHTSNLTCVKFSNTTDTTNSQCIRWVTPPTQIVCLPSGIFFVCGTSAYRCLNGSSESMCFLSFLVPPMTIYTEQDLYNYVVSKPRNKRVPILPFVIGAGVLGALGTGIGGITTSTQFYYKLSQELNGDMERVADSLVTLQDQLNSLAAVVLQNRRALDLLTAERGGTCLFLGEECCYYVNQSGIVTEKVKEIRDRIQRRAEELRNTGPWGLLSQWMPWILPFLGPLAAIILLLLFGPCIFNLLVNFVSSRIEAVKLQMEPKMQSKTKIYRRPLDRPASPRSDVNDIKGTPPEEILTAQPLLRPNSAGSS</sequence>
<reference key="1">
    <citation type="journal article" date="2004" name="Proc. Natl. Acad. Sci. U.S.A.">
        <title>The endogenous retroviral locus ERVWE1 is a bona fide gene involved in hominoid placental physiology.</title>
        <authorList>
            <person name="Mallet F."/>
            <person name="Bouton O."/>
            <person name="Prudhomme S."/>
            <person name="Cheynet V."/>
            <person name="Oriol G."/>
            <person name="Bonnaud B."/>
            <person name="Lucotte G."/>
            <person name="Duret L."/>
            <person name="Mandrand B."/>
        </authorList>
    </citation>
    <scope>NUCLEOTIDE SEQUENCE [GENOMIC DNA]</scope>
</reference>
<organism>
    <name type="scientific">Pan troglodytes</name>
    <name type="common">Chimpanzee</name>
    <dbReference type="NCBI Taxonomy" id="9598"/>
    <lineage>
        <taxon>Eukaryota</taxon>
        <taxon>Metazoa</taxon>
        <taxon>Chordata</taxon>
        <taxon>Craniata</taxon>
        <taxon>Vertebrata</taxon>
        <taxon>Euteleostomi</taxon>
        <taxon>Mammalia</taxon>
        <taxon>Eutheria</taxon>
        <taxon>Euarchontoglires</taxon>
        <taxon>Primates</taxon>
        <taxon>Haplorrhini</taxon>
        <taxon>Catarrhini</taxon>
        <taxon>Hominidae</taxon>
        <taxon>Pan</taxon>
    </lineage>
</organism>
<accession>P61563</accession>
<feature type="signal peptide" evidence="5">
    <location>
        <begin position="1"/>
        <end position="20"/>
    </location>
</feature>
<feature type="chain" id="PRO_0000008491" description="Syncytin-1">
    <location>
        <begin position="21"/>
        <end position="538"/>
    </location>
</feature>
<feature type="chain" id="PRO_0000008492" description="Surface protein" evidence="1">
    <location>
        <begin position="21"/>
        <end position="317"/>
    </location>
</feature>
<feature type="chain" id="PRO_0000008493" description="Transmembrane protein" evidence="1">
    <location>
        <begin position="318"/>
        <end position="538"/>
    </location>
</feature>
<feature type="topological domain" description="Extracellular" evidence="5">
    <location>
        <begin position="21"/>
        <end position="443"/>
    </location>
</feature>
<feature type="transmembrane region" description="Helical" evidence="5">
    <location>
        <begin position="444"/>
        <end position="464"/>
    </location>
</feature>
<feature type="topological domain" description="Cytoplasmic" evidence="5">
    <location>
        <begin position="465"/>
        <end position="538"/>
    </location>
</feature>
<feature type="region of interest" description="Fusion peptide" evidence="5">
    <location>
        <begin position="320"/>
        <end position="340"/>
    </location>
</feature>
<feature type="region of interest" description="Immunosuppression" evidence="1">
    <location>
        <begin position="380"/>
        <end position="396"/>
    </location>
</feature>
<feature type="region of interest" description="Essential for the fusiogenic function" evidence="1">
    <location>
        <begin position="465"/>
        <end position="484"/>
    </location>
</feature>
<feature type="region of interest" description="Disordered" evidence="6">
    <location>
        <begin position="496"/>
        <end position="538"/>
    </location>
</feature>
<feature type="short sequence motif" description="CXXC" evidence="7">
    <location>
        <begin position="186"/>
        <end position="189"/>
    </location>
</feature>
<feature type="short sequence motif" description="CX6CC" evidence="7">
    <location>
        <begin position="397"/>
        <end position="405"/>
    </location>
</feature>
<feature type="site" description="Cleavage" evidence="4">
    <location>
        <begin position="317"/>
        <end position="318"/>
    </location>
</feature>
<feature type="glycosylation site" description="N-linked (GlcNAc...) asparagine" evidence="5">
    <location>
        <position position="169"/>
    </location>
</feature>
<feature type="glycosylation site" description="N-linked (GlcNAc...) asparagine" evidence="5">
    <location>
        <position position="208"/>
    </location>
</feature>
<feature type="glycosylation site" description="N-linked (GlcNAc...) asparagine" evidence="5">
    <location>
        <position position="214"/>
    </location>
</feature>
<feature type="glycosylation site" description="N-linked (GlcNAc...) asparagine" evidence="5">
    <location>
        <position position="234"/>
    </location>
</feature>
<feature type="glycosylation site" description="N-linked (GlcNAc...) asparagine" evidence="5">
    <location>
        <position position="242"/>
    </location>
</feature>
<feature type="glycosylation site" description="N-linked (GlcNAc...) asparagine" evidence="5">
    <location>
        <position position="281"/>
    </location>
</feature>
<feature type="glycosylation site" description="N-linked (GlcNAc...) asparagine" evidence="5">
    <location>
        <position position="409"/>
    </location>
</feature>
<feature type="disulfide bond" description="Interchain (between SU and TM chains, or C-189 with C-405); in linked form" evidence="4">
    <location>
        <begin position="186"/>
        <end position="405"/>
    </location>
</feature>
<feature type="disulfide bond" evidence="2">
    <location>
        <begin position="186"/>
        <end position="189"/>
    </location>
</feature>
<feature type="disulfide bond" evidence="3">
    <location>
        <begin position="397"/>
        <end position="404"/>
    </location>
</feature>
<gene>
    <name type="primary">ERVW-1</name>
    <name type="synonym">ERVWE1</name>
</gene>
<name>SYCY1_PANTR</name>